<protein>
    <recommendedName>
        <fullName evidence="1">Ribosome maturation factor RimM</fullName>
    </recommendedName>
</protein>
<evidence type="ECO:0000255" key="1">
    <source>
        <dbReference type="HAMAP-Rule" id="MF_00014"/>
    </source>
</evidence>
<evidence type="ECO:0000256" key="2">
    <source>
        <dbReference type="SAM" id="MobiDB-lite"/>
    </source>
</evidence>
<sequence length="199" mass="21156">MSKPQNPVQMAVIGAAHGIKGELRVKTFTGEPMALADYGPLYARDGRAFQITDIRPANTVVVVRFKGISDRNAAEALAGTELFVDRSMLPDDGEEDEFYHADLVGLEVRDDTGTALGKVVAVHNFGGGDILDVTLAGRKGVLIPFTQAAVPDVSVAEGFVRVDPVAAGLVEDEDGDAPREEDFDPKGRPRGPRDAGGNR</sequence>
<proteinExistence type="inferred from homology"/>
<organism>
    <name type="scientific">Mesorhizobium japonicum (strain LMG 29417 / CECT 9101 / MAFF 303099)</name>
    <name type="common">Mesorhizobium loti (strain MAFF 303099)</name>
    <dbReference type="NCBI Taxonomy" id="266835"/>
    <lineage>
        <taxon>Bacteria</taxon>
        <taxon>Pseudomonadati</taxon>
        <taxon>Pseudomonadota</taxon>
        <taxon>Alphaproteobacteria</taxon>
        <taxon>Hyphomicrobiales</taxon>
        <taxon>Phyllobacteriaceae</taxon>
        <taxon>Mesorhizobium</taxon>
    </lineage>
</organism>
<feature type="chain" id="PRO_0000163339" description="Ribosome maturation factor RimM">
    <location>
        <begin position="1"/>
        <end position="199"/>
    </location>
</feature>
<feature type="domain" description="PRC barrel" evidence="1">
    <location>
        <begin position="95"/>
        <end position="168"/>
    </location>
</feature>
<feature type="region of interest" description="Disordered" evidence="2">
    <location>
        <begin position="167"/>
        <end position="199"/>
    </location>
</feature>
<feature type="compositionally biased region" description="Basic and acidic residues" evidence="2">
    <location>
        <begin position="176"/>
        <end position="193"/>
    </location>
</feature>
<dbReference type="EMBL" id="BA000012">
    <property type="protein sequence ID" value="BAB50980.1"/>
    <property type="molecule type" value="Genomic_DNA"/>
</dbReference>
<dbReference type="RefSeq" id="WP_010912322.1">
    <property type="nucleotide sequence ID" value="NC_002678.2"/>
</dbReference>
<dbReference type="SMR" id="Q98EE0"/>
<dbReference type="KEGG" id="mlo:mll4288"/>
<dbReference type="PATRIC" id="fig|266835.9.peg.3383"/>
<dbReference type="eggNOG" id="COG0806">
    <property type="taxonomic scope" value="Bacteria"/>
</dbReference>
<dbReference type="HOGENOM" id="CLU_077636_0_1_5"/>
<dbReference type="Proteomes" id="UP000000552">
    <property type="component" value="Chromosome"/>
</dbReference>
<dbReference type="GO" id="GO:0005737">
    <property type="term" value="C:cytoplasm"/>
    <property type="evidence" value="ECO:0007669"/>
    <property type="project" value="UniProtKB-SubCell"/>
</dbReference>
<dbReference type="GO" id="GO:0005840">
    <property type="term" value="C:ribosome"/>
    <property type="evidence" value="ECO:0007669"/>
    <property type="project" value="InterPro"/>
</dbReference>
<dbReference type="GO" id="GO:0043022">
    <property type="term" value="F:ribosome binding"/>
    <property type="evidence" value="ECO:0007669"/>
    <property type="project" value="InterPro"/>
</dbReference>
<dbReference type="GO" id="GO:0042274">
    <property type="term" value="P:ribosomal small subunit biogenesis"/>
    <property type="evidence" value="ECO:0007669"/>
    <property type="project" value="UniProtKB-UniRule"/>
</dbReference>
<dbReference type="GO" id="GO:0006364">
    <property type="term" value="P:rRNA processing"/>
    <property type="evidence" value="ECO:0007669"/>
    <property type="project" value="UniProtKB-UniRule"/>
</dbReference>
<dbReference type="Gene3D" id="2.30.30.240">
    <property type="entry name" value="PRC-barrel domain"/>
    <property type="match status" value="1"/>
</dbReference>
<dbReference type="Gene3D" id="2.40.30.60">
    <property type="entry name" value="RimM"/>
    <property type="match status" value="1"/>
</dbReference>
<dbReference type="HAMAP" id="MF_00014">
    <property type="entry name" value="Ribosome_mat_RimM"/>
    <property type="match status" value="1"/>
</dbReference>
<dbReference type="InterPro" id="IPR027275">
    <property type="entry name" value="PRC-brl_dom"/>
</dbReference>
<dbReference type="InterPro" id="IPR011033">
    <property type="entry name" value="PRC_barrel-like_sf"/>
</dbReference>
<dbReference type="InterPro" id="IPR011961">
    <property type="entry name" value="RimM"/>
</dbReference>
<dbReference type="InterPro" id="IPR002676">
    <property type="entry name" value="RimM_N"/>
</dbReference>
<dbReference type="InterPro" id="IPR036976">
    <property type="entry name" value="RimM_N_sf"/>
</dbReference>
<dbReference type="InterPro" id="IPR009000">
    <property type="entry name" value="Transl_B-barrel_sf"/>
</dbReference>
<dbReference type="NCBIfam" id="TIGR02273">
    <property type="entry name" value="16S_RimM"/>
    <property type="match status" value="1"/>
</dbReference>
<dbReference type="PANTHER" id="PTHR33692">
    <property type="entry name" value="RIBOSOME MATURATION FACTOR RIMM"/>
    <property type="match status" value="1"/>
</dbReference>
<dbReference type="PANTHER" id="PTHR33692:SF1">
    <property type="entry name" value="RIBOSOME MATURATION FACTOR RIMM"/>
    <property type="match status" value="1"/>
</dbReference>
<dbReference type="Pfam" id="PF05239">
    <property type="entry name" value="PRC"/>
    <property type="match status" value="1"/>
</dbReference>
<dbReference type="Pfam" id="PF01782">
    <property type="entry name" value="RimM"/>
    <property type="match status" value="1"/>
</dbReference>
<dbReference type="SUPFAM" id="SSF50346">
    <property type="entry name" value="PRC-barrel domain"/>
    <property type="match status" value="1"/>
</dbReference>
<dbReference type="SUPFAM" id="SSF50447">
    <property type="entry name" value="Translation proteins"/>
    <property type="match status" value="1"/>
</dbReference>
<reference key="1">
    <citation type="journal article" date="2000" name="DNA Res.">
        <title>Complete genome structure of the nitrogen-fixing symbiotic bacterium Mesorhizobium loti.</title>
        <authorList>
            <person name="Kaneko T."/>
            <person name="Nakamura Y."/>
            <person name="Sato S."/>
            <person name="Asamizu E."/>
            <person name="Kato T."/>
            <person name="Sasamoto S."/>
            <person name="Watanabe A."/>
            <person name="Idesawa K."/>
            <person name="Ishikawa A."/>
            <person name="Kawashima K."/>
            <person name="Kimura T."/>
            <person name="Kishida Y."/>
            <person name="Kiyokawa C."/>
            <person name="Kohara M."/>
            <person name="Matsumoto M."/>
            <person name="Matsuno A."/>
            <person name="Mochizuki Y."/>
            <person name="Nakayama S."/>
            <person name="Nakazaki N."/>
            <person name="Shimpo S."/>
            <person name="Sugimoto M."/>
            <person name="Takeuchi C."/>
            <person name="Yamada M."/>
            <person name="Tabata S."/>
        </authorList>
    </citation>
    <scope>NUCLEOTIDE SEQUENCE [LARGE SCALE GENOMIC DNA]</scope>
    <source>
        <strain>LMG 29417 / CECT 9101 / MAFF 303099</strain>
    </source>
</reference>
<accession>Q98EE0</accession>
<keyword id="KW-0143">Chaperone</keyword>
<keyword id="KW-0963">Cytoplasm</keyword>
<keyword id="KW-0690">Ribosome biogenesis</keyword>
<keyword id="KW-0698">rRNA processing</keyword>
<name>RIMM_RHILO</name>
<comment type="function">
    <text evidence="1">An accessory protein needed during the final step in the assembly of 30S ribosomal subunit, possibly for assembly of the head region. Essential for efficient processing of 16S rRNA. May be needed both before and after RbfA during the maturation of 16S rRNA. It has affinity for free ribosomal 30S subunits but not for 70S ribosomes.</text>
</comment>
<comment type="subunit">
    <text evidence="1">Binds ribosomal protein uS19.</text>
</comment>
<comment type="subcellular location">
    <subcellularLocation>
        <location evidence="1">Cytoplasm</location>
    </subcellularLocation>
</comment>
<comment type="domain">
    <text evidence="1">The PRC barrel domain binds ribosomal protein uS19.</text>
</comment>
<comment type="similarity">
    <text evidence="1">Belongs to the RimM family.</text>
</comment>
<gene>
    <name evidence="1" type="primary">rimM</name>
    <name type="ordered locus">mll4288</name>
</gene>